<gene>
    <name evidence="1" type="primary">ackA</name>
    <name type="ordered locus">ESA_00923</name>
</gene>
<sequence>MSSKLVLVLNCGSSSLKFAIIDALNGDEYLSGLAECFHLPEARIKWKMDGGKHEAALGAGAAHSEALNFIVNTILAQKPELSAQLTAIGHRIVHGGEKYTSSVVIDETVIQGIKDSASFAPLHNPAHLIGIAEALKSFPHLADKNVAVFDTAFHQTMPEESYLYALPYKLYKEHGIRRYGAHGTSHFYVTQEAAKMLNKPVEEVNIITCHLGNGGSVSAIRNGKCVDTSMGLTPLEGLVMGTRSGDIDPAIVFHLHDALGMSVDDINKLLTKESGLLGLTEVTSDCRYVEDNYATKEDAKRAMDVYCHRLAKYIGSYTALMEGRLDAVVFTGGIGENAAMVRELSLGKLGVLGFEVDHERNLAARFGKSGFINKEGTTLAMVIPTNEELVIAQDACRLTA</sequence>
<accession>A7MH28</accession>
<evidence type="ECO:0000255" key="1">
    <source>
        <dbReference type="HAMAP-Rule" id="MF_00020"/>
    </source>
</evidence>
<name>ACKA_CROS8</name>
<dbReference type="EC" id="2.7.2.1" evidence="1"/>
<dbReference type="EMBL" id="CP000783">
    <property type="protein sequence ID" value="ABU76193.1"/>
    <property type="molecule type" value="Genomic_DNA"/>
</dbReference>
<dbReference type="RefSeq" id="WP_004387827.1">
    <property type="nucleotide sequence ID" value="NC_009778.1"/>
</dbReference>
<dbReference type="SMR" id="A7MH28"/>
<dbReference type="GeneID" id="56729857"/>
<dbReference type="KEGG" id="esa:ESA_00923"/>
<dbReference type="HOGENOM" id="CLU_020352_0_0_6"/>
<dbReference type="UniPathway" id="UPA00340">
    <property type="reaction ID" value="UER00458"/>
</dbReference>
<dbReference type="Proteomes" id="UP000000260">
    <property type="component" value="Chromosome"/>
</dbReference>
<dbReference type="GO" id="GO:0005829">
    <property type="term" value="C:cytosol"/>
    <property type="evidence" value="ECO:0007669"/>
    <property type="project" value="TreeGrafter"/>
</dbReference>
<dbReference type="GO" id="GO:0008776">
    <property type="term" value="F:acetate kinase activity"/>
    <property type="evidence" value="ECO:0007669"/>
    <property type="project" value="UniProtKB-UniRule"/>
</dbReference>
<dbReference type="GO" id="GO:0005524">
    <property type="term" value="F:ATP binding"/>
    <property type="evidence" value="ECO:0007669"/>
    <property type="project" value="UniProtKB-KW"/>
</dbReference>
<dbReference type="GO" id="GO:0000287">
    <property type="term" value="F:magnesium ion binding"/>
    <property type="evidence" value="ECO:0007669"/>
    <property type="project" value="UniProtKB-UniRule"/>
</dbReference>
<dbReference type="GO" id="GO:0006083">
    <property type="term" value="P:acetate metabolic process"/>
    <property type="evidence" value="ECO:0007669"/>
    <property type="project" value="TreeGrafter"/>
</dbReference>
<dbReference type="GO" id="GO:0006085">
    <property type="term" value="P:acetyl-CoA biosynthetic process"/>
    <property type="evidence" value="ECO:0007669"/>
    <property type="project" value="UniProtKB-UniRule"/>
</dbReference>
<dbReference type="CDD" id="cd24010">
    <property type="entry name" value="ASKHA_NBD_AcK_PK"/>
    <property type="match status" value="1"/>
</dbReference>
<dbReference type="FunFam" id="3.30.420.40:FF:000041">
    <property type="entry name" value="Acetate kinase"/>
    <property type="match status" value="1"/>
</dbReference>
<dbReference type="FunFam" id="3.30.420.40:FF:000042">
    <property type="entry name" value="Acetate kinase"/>
    <property type="match status" value="1"/>
</dbReference>
<dbReference type="Gene3D" id="3.30.420.40">
    <property type="match status" value="2"/>
</dbReference>
<dbReference type="HAMAP" id="MF_00020">
    <property type="entry name" value="Acetate_kinase"/>
    <property type="match status" value="1"/>
</dbReference>
<dbReference type="InterPro" id="IPR004372">
    <property type="entry name" value="Ac/propionate_kinase"/>
</dbReference>
<dbReference type="InterPro" id="IPR000890">
    <property type="entry name" value="Aliphatic_acid_kin_short-chain"/>
</dbReference>
<dbReference type="InterPro" id="IPR023865">
    <property type="entry name" value="Aliphatic_acid_kinase_CS"/>
</dbReference>
<dbReference type="InterPro" id="IPR043129">
    <property type="entry name" value="ATPase_NBD"/>
</dbReference>
<dbReference type="NCBIfam" id="TIGR00016">
    <property type="entry name" value="ackA"/>
    <property type="match status" value="1"/>
</dbReference>
<dbReference type="PANTHER" id="PTHR21060">
    <property type="entry name" value="ACETATE KINASE"/>
    <property type="match status" value="1"/>
</dbReference>
<dbReference type="PANTHER" id="PTHR21060:SF21">
    <property type="entry name" value="ACETATE KINASE"/>
    <property type="match status" value="1"/>
</dbReference>
<dbReference type="Pfam" id="PF00871">
    <property type="entry name" value="Acetate_kinase"/>
    <property type="match status" value="1"/>
</dbReference>
<dbReference type="PIRSF" id="PIRSF000722">
    <property type="entry name" value="Acetate_prop_kin"/>
    <property type="match status" value="1"/>
</dbReference>
<dbReference type="PRINTS" id="PR00471">
    <property type="entry name" value="ACETATEKNASE"/>
</dbReference>
<dbReference type="SUPFAM" id="SSF53067">
    <property type="entry name" value="Actin-like ATPase domain"/>
    <property type="match status" value="2"/>
</dbReference>
<dbReference type="PROSITE" id="PS01075">
    <property type="entry name" value="ACETATE_KINASE_1"/>
    <property type="match status" value="1"/>
</dbReference>
<dbReference type="PROSITE" id="PS01076">
    <property type="entry name" value="ACETATE_KINASE_2"/>
    <property type="match status" value="1"/>
</dbReference>
<comment type="function">
    <text evidence="1">Catalyzes the formation of acetyl phosphate from acetate and ATP. Can also catalyze the reverse reaction.</text>
</comment>
<comment type="catalytic activity">
    <reaction evidence="1">
        <text>acetate + ATP = acetyl phosphate + ADP</text>
        <dbReference type="Rhea" id="RHEA:11352"/>
        <dbReference type="ChEBI" id="CHEBI:22191"/>
        <dbReference type="ChEBI" id="CHEBI:30089"/>
        <dbReference type="ChEBI" id="CHEBI:30616"/>
        <dbReference type="ChEBI" id="CHEBI:456216"/>
        <dbReference type="EC" id="2.7.2.1"/>
    </reaction>
</comment>
<comment type="cofactor">
    <cofactor evidence="1">
        <name>Mg(2+)</name>
        <dbReference type="ChEBI" id="CHEBI:18420"/>
    </cofactor>
    <cofactor evidence="1">
        <name>Mn(2+)</name>
        <dbReference type="ChEBI" id="CHEBI:29035"/>
    </cofactor>
    <text evidence="1">Mg(2+). Can also accept Mn(2+).</text>
</comment>
<comment type="pathway">
    <text evidence="1">Metabolic intermediate biosynthesis; acetyl-CoA biosynthesis; acetyl-CoA from acetate: step 1/2.</text>
</comment>
<comment type="subunit">
    <text evidence="1">Homodimer.</text>
</comment>
<comment type="subcellular location">
    <subcellularLocation>
        <location evidence="1">Cytoplasm</location>
    </subcellularLocation>
</comment>
<comment type="similarity">
    <text evidence="1">Belongs to the acetokinase family.</text>
</comment>
<reference key="1">
    <citation type="journal article" date="2010" name="PLoS ONE">
        <title>Genome sequence of Cronobacter sakazakii BAA-894 and comparative genomic hybridization analysis with other Cronobacter species.</title>
        <authorList>
            <person name="Kucerova E."/>
            <person name="Clifton S.W."/>
            <person name="Xia X.Q."/>
            <person name="Long F."/>
            <person name="Porwollik S."/>
            <person name="Fulton L."/>
            <person name="Fronick C."/>
            <person name="Minx P."/>
            <person name="Kyung K."/>
            <person name="Warren W."/>
            <person name="Fulton R."/>
            <person name="Feng D."/>
            <person name="Wollam A."/>
            <person name="Shah N."/>
            <person name="Bhonagiri V."/>
            <person name="Nash W.E."/>
            <person name="Hallsworth-Pepin K."/>
            <person name="Wilson R.K."/>
            <person name="McClelland M."/>
            <person name="Forsythe S.J."/>
        </authorList>
    </citation>
    <scope>NUCLEOTIDE SEQUENCE [LARGE SCALE GENOMIC DNA]</scope>
    <source>
        <strain>ATCC BAA-894</strain>
    </source>
</reference>
<protein>
    <recommendedName>
        <fullName evidence="1">Acetate kinase</fullName>
        <ecNumber evidence="1">2.7.2.1</ecNumber>
    </recommendedName>
    <alternativeName>
        <fullName evidence="1">Acetokinase</fullName>
    </alternativeName>
</protein>
<keyword id="KW-0067">ATP-binding</keyword>
<keyword id="KW-0963">Cytoplasm</keyword>
<keyword id="KW-0418">Kinase</keyword>
<keyword id="KW-0460">Magnesium</keyword>
<keyword id="KW-0479">Metal-binding</keyword>
<keyword id="KW-0547">Nucleotide-binding</keyword>
<keyword id="KW-1185">Reference proteome</keyword>
<keyword id="KW-0808">Transferase</keyword>
<proteinExistence type="inferred from homology"/>
<organism>
    <name type="scientific">Cronobacter sakazakii (strain ATCC BAA-894)</name>
    <name type="common">Enterobacter sakazakii</name>
    <dbReference type="NCBI Taxonomy" id="290339"/>
    <lineage>
        <taxon>Bacteria</taxon>
        <taxon>Pseudomonadati</taxon>
        <taxon>Pseudomonadota</taxon>
        <taxon>Gammaproteobacteria</taxon>
        <taxon>Enterobacterales</taxon>
        <taxon>Enterobacteriaceae</taxon>
        <taxon>Cronobacter</taxon>
    </lineage>
</organism>
<feature type="chain" id="PRO_1000002231" description="Acetate kinase">
    <location>
        <begin position="1"/>
        <end position="400"/>
    </location>
</feature>
<feature type="active site" description="Proton donor/acceptor" evidence="1">
    <location>
        <position position="150"/>
    </location>
</feature>
<feature type="binding site" evidence="1">
    <location>
        <position position="10"/>
    </location>
    <ligand>
        <name>Mg(2+)</name>
        <dbReference type="ChEBI" id="CHEBI:18420"/>
    </ligand>
</feature>
<feature type="binding site" evidence="1">
    <location>
        <position position="17"/>
    </location>
    <ligand>
        <name>ATP</name>
        <dbReference type="ChEBI" id="CHEBI:30616"/>
    </ligand>
</feature>
<feature type="binding site" evidence="1">
    <location>
        <position position="91"/>
    </location>
    <ligand>
        <name>substrate</name>
    </ligand>
</feature>
<feature type="binding site" evidence="1">
    <location>
        <begin position="210"/>
        <end position="214"/>
    </location>
    <ligand>
        <name>ATP</name>
        <dbReference type="ChEBI" id="CHEBI:30616"/>
    </ligand>
</feature>
<feature type="binding site" evidence="1">
    <location>
        <begin position="285"/>
        <end position="287"/>
    </location>
    <ligand>
        <name>ATP</name>
        <dbReference type="ChEBI" id="CHEBI:30616"/>
    </ligand>
</feature>
<feature type="binding site" evidence="1">
    <location>
        <begin position="333"/>
        <end position="337"/>
    </location>
    <ligand>
        <name>ATP</name>
        <dbReference type="ChEBI" id="CHEBI:30616"/>
    </ligand>
</feature>
<feature type="binding site" evidence="1">
    <location>
        <position position="387"/>
    </location>
    <ligand>
        <name>Mg(2+)</name>
        <dbReference type="ChEBI" id="CHEBI:18420"/>
    </ligand>
</feature>
<feature type="site" description="Transition state stabilizer" evidence="1">
    <location>
        <position position="182"/>
    </location>
</feature>
<feature type="site" description="Transition state stabilizer" evidence="1">
    <location>
        <position position="243"/>
    </location>
</feature>